<feature type="chain" id="PRO_0000143300" description="Maturase K">
    <location>
        <begin position="1"/>
        <end position="505"/>
    </location>
</feature>
<protein>
    <recommendedName>
        <fullName evidence="1">Maturase K</fullName>
    </recommendedName>
    <alternativeName>
        <fullName evidence="1">Intron maturase</fullName>
    </alternativeName>
</protein>
<name>MATK_CALFL</name>
<dbReference type="EMBL" id="AY525334">
    <property type="protein sequence ID" value="AAS09901.1"/>
    <property type="molecule type" value="Genomic_DNA"/>
</dbReference>
<dbReference type="GO" id="GO:0009507">
    <property type="term" value="C:chloroplast"/>
    <property type="evidence" value="ECO:0007669"/>
    <property type="project" value="UniProtKB-SubCell"/>
</dbReference>
<dbReference type="GO" id="GO:0003723">
    <property type="term" value="F:RNA binding"/>
    <property type="evidence" value="ECO:0007669"/>
    <property type="project" value="UniProtKB-KW"/>
</dbReference>
<dbReference type="GO" id="GO:0006397">
    <property type="term" value="P:mRNA processing"/>
    <property type="evidence" value="ECO:0007669"/>
    <property type="project" value="UniProtKB-KW"/>
</dbReference>
<dbReference type="GO" id="GO:0008380">
    <property type="term" value="P:RNA splicing"/>
    <property type="evidence" value="ECO:0007669"/>
    <property type="project" value="UniProtKB-UniRule"/>
</dbReference>
<dbReference type="GO" id="GO:0008033">
    <property type="term" value="P:tRNA processing"/>
    <property type="evidence" value="ECO:0007669"/>
    <property type="project" value="UniProtKB-KW"/>
</dbReference>
<dbReference type="HAMAP" id="MF_01390">
    <property type="entry name" value="MatK"/>
    <property type="match status" value="1"/>
</dbReference>
<dbReference type="InterPro" id="IPR024937">
    <property type="entry name" value="Domain_X"/>
</dbReference>
<dbReference type="InterPro" id="IPR002866">
    <property type="entry name" value="Maturase_MatK"/>
</dbReference>
<dbReference type="InterPro" id="IPR024942">
    <property type="entry name" value="Maturase_MatK_N"/>
</dbReference>
<dbReference type="PANTHER" id="PTHR34811">
    <property type="entry name" value="MATURASE K"/>
    <property type="match status" value="1"/>
</dbReference>
<dbReference type="PANTHER" id="PTHR34811:SF1">
    <property type="entry name" value="MATURASE K"/>
    <property type="match status" value="1"/>
</dbReference>
<dbReference type="Pfam" id="PF01348">
    <property type="entry name" value="Intron_maturas2"/>
    <property type="match status" value="1"/>
</dbReference>
<dbReference type="Pfam" id="PF01824">
    <property type="entry name" value="MatK_N"/>
    <property type="match status" value="1"/>
</dbReference>
<comment type="function">
    <text evidence="1">Usually encoded in the trnK tRNA gene intron. Probably assists in splicing its own and other chloroplast group II introns.</text>
</comment>
<comment type="subcellular location">
    <subcellularLocation>
        <location>Plastid</location>
        <location>Chloroplast</location>
    </subcellularLocation>
</comment>
<comment type="similarity">
    <text evidence="1">Belongs to the intron maturase 2 family. MatK subfamily.</text>
</comment>
<evidence type="ECO:0000255" key="1">
    <source>
        <dbReference type="HAMAP-Rule" id="MF_01390"/>
    </source>
</evidence>
<proteinExistence type="inferred from homology"/>
<keyword id="KW-0150">Chloroplast</keyword>
<keyword id="KW-0507">mRNA processing</keyword>
<keyword id="KW-0934">Plastid</keyword>
<keyword id="KW-0694">RNA-binding</keyword>
<keyword id="KW-0819">tRNA processing</keyword>
<reference key="1">
    <citation type="journal article" date="2004" name="Harv. Pap. Bot.">
        <title>Phylogenetics of Calycanthaceae based on molecular and morphological data, with special reference to divergent paralogs of the nrDNA ITS region.</title>
        <authorList>
            <person name="Li J."/>
            <person name="Ledger J."/>
            <person name="Ward T."/>
            <person name="Del Tredici P."/>
        </authorList>
    </citation>
    <scope>NUCLEOTIDE SEQUENCE [GENOMIC DNA]</scope>
</reference>
<geneLocation type="chloroplast"/>
<sequence>MEELQGYLEIDGFRQHHFLYPLLLQEYIYALAHDHGLNGSILSEHMENLSHDNKSSSLIVKRLITRMHQQNHFIISVNDSNQKGFVGHNKNFHSQKISEGFAVIVEIPFSLQLVSSLEEKEIAKFHNSRSIHSIFPFFEDKLSHLNHVSDILIPYPIHLEILVQTLRCWIQDAPSLHLLRFFLHEYWNSNSLITPKKSISFFSKENQRLFLFLYNSHVYECESVFIFLRKQSSHLRSTSFGSFLERTHFYGKIEHLVVVLGNDFPKTLWLFKDPFVHYVRYQGKSILASRGTQFLIKKWKYHLVNFWQCHFYLWSQPDRIHLNQLCNHSFYFLGYLSSVQLNSSVVRSQMLENAFRMDTAIKKFETIVPIIPLIGSLAKAKFCNGSGHPISKPFRTDLSDSEIINRFGRICKNLSHYHSGSSKKQSLYRIKFILRLSCARTLSRKHKSTVRAFLKRLGSELLEEFLTEEEQVLSLLFPRTPSHRPHRERIWYLDIICINDLANHE</sequence>
<accession>Q6QUL7</accession>
<organism>
    <name type="scientific">Calycanthus floridus</name>
    <name type="common">Eastern sweetshrub</name>
    <dbReference type="NCBI Taxonomy" id="3429"/>
    <lineage>
        <taxon>Eukaryota</taxon>
        <taxon>Viridiplantae</taxon>
        <taxon>Streptophyta</taxon>
        <taxon>Embryophyta</taxon>
        <taxon>Tracheophyta</taxon>
        <taxon>Spermatophyta</taxon>
        <taxon>Magnoliopsida</taxon>
        <taxon>Magnoliidae</taxon>
        <taxon>Laurales</taxon>
        <taxon>Calycanthaceae</taxon>
        <taxon>Calycanthus</taxon>
    </lineage>
</organism>
<gene>
    <name evidence="1" type="primary">matK</name>
</gene>